<name>TSAD_BUCA5</name>
<reference key="1">
    <citation type="journal article" date="2009" name="Science">
        <title>The dynamics and time scale of ongoing genomic erosion in symbiotic bacteria.</title>
        <authorList>
            <person name="Moran N.A."/>
            <person name="McLaughlin H.J."/>
            <person name="Sorek R."/>
        </authorList>
    </citation>
    <scope>NUCLEOTIDE SEQUENCE [LARGE SCALE GENOMIC DNA]</scope>
    <source>
        <strain>5A</strain>
    </source>
</reference>
<sequence>MRILGIETSCDDTGIAIYDTNKGLLINEIYNQRKLNNIYGGIIPELASREHMEAMIVLLNKIFKKKNIYKYVDMIAYTAGPGLIGSLLVGATFACSLGLSLNIPVLPVHHMEAHLLSPMLDYKTIQFPFIGLLVSGKHTQIIGAHKFGEYEILGNCLDDAAGEAFDKTAKLLGLKYPGGLELSKLASKGIKDYFYFPRPMIHHSDLNFSFSGLKTFAAQTIKKSSKSMQEKANIAKAFEDAVIDILLIKTKKALKKQKWKRLVIAGGVSANQKLRKKSEIMVKKNFNGTVFYSSLEFCTDNAAMIAYLGSLRQKEARNSQLEILVKPKWSIDDLCF</sequence>
<evidence type="ECO:0000255" key="1">
    <source>
        <dbReference type="HAMAP-Rule" id="MF_01445"/>
    </source>
</evidence>
<proteinExistence type="inferred from homology"/>
<gene>
    <name evidence="1" type="primary">tsaD</name>
    <name type="synonym">gcp</name>
    <name type="ordered locus">BUAP5A_057</name>
</gene>
<comment type="function">
    <text evidence="1">Required for the formation of a threonylcarbamoyl group on adenosine at position 37 (t(6)A37) in tRNAs that read codons beginning with adenine. Is involved in the transfer of the threonylcarbamoyl moiety of threonylcarbamoyl-AMP (TC-AMP) to the N6 group of A37, together with TsaE and TsaB. TsaD likely plays a direct catalytic role in this reaction.</text>
</comment>
<comment type="catalytic activity">
    <reaction evidence="1">
        <text>L-threonylcarbamoyladenylate + adenosine(37) in tRNA = N(6)-L-threonylcarbamoyladenosine(37) in tRNA + AMP + H(+)</text>
        <dbReference type="Rhea" id="RHEA:37059"/>
        <dbReference type="Rhea" id="RHEA-COMP:10162"/>
        <dbReference type="Rhea" id="RHEA-COMP:10163"/>
        <dbReference type="ChEBI" id="CHEBI:15378"/>
        <dbReference type="ChEBI" id="CHEBI:73682"/>
        <dbReference type="ChEBI" id="CHEBI:74411"/>
        <dbReference type="ChEBI" id="CHEBI:74418"/>
        <dbReference type="ChEBI" id="CHEBI:456215"/>
        <dbReference type="EC" id="2.3.1.234"/>
    </reaction>
</comment>
<comment type="cofactor">
    <cofactor evidence="1">
        <name>Fe(2+)</name>
        <dbReference type="ChEBI" id="CHEBI:29033"/>
    </cofactor>
    <text evidence="1">Binds 1 Fe(2+) ion per subunit.</text>
</comment>
<comment type="subcellular location">
    <subcellularLocation>
        <location evidence="1">Cytoplasm</location>
    </subcellularLocation>
</comment>
<comment type="similarity">
    <text evidence="1">Belongs to the KAE1 / TsaD family.</text>
</comment>
<feature type="chain" id="PRO_1000184955" description="tRNA N6-adenosine threonylcarbamoyltransferase">
    <location>
        <begin position="1"/>
        <end position="336"/>
    </location>
</feature>
<feature type="binding site" evidence="1">
    <location>
        <position position="110"/>
    </location>
    <ligand>
        <name>Fe cation</name>
        <dbReference type="ChEBI" id="CHEBI:24875"/>
    </ligand>
</feature>
<feature type="binding site" evidence="1">
    <location>
        <position position="114"/>
    </location>
    <ligand>
        <name>Fe cation</name>
        <dbReference type="ChEBI" id="CHEBI:24875"/>
    </ligand>
</feature>
<feature type="binding site" evidence="1">
    <location>
        <begin position="133"/>
        <end position="137"/>
    </location>
    <ligand>
        <name>substrate</name>
    </ligand>
</feature>
<feature type="binding site" evidence="1">
    <location>
        <position position="166"/>
    </location>
    <ligand>
        <name>substrate</name>
    </ligand>
</feature>
<feature type="binding site" evidence="1">
    <location>
        <position position="179"/>
    </location>
    <ligand>
        <name>substrate</name>
    </ligand>
</feature>
<feature type="binding site" evidence="1">
    <location>
        <position position="271"/>
    </location>
    <ligand>
        <name>substrate</name>
    </ligand>
</feature>
<feature type="binding site" evidence="1">
    <location>
        <position position="300"/>
    </location>
    <ligand>
        <name>Fe cation</name>
        <dbReference type="ChEBI" id="CHEBI:24875"/>
    </ligand>
</feature>
<organism>
    <name type="scientific">Buchnera aphidicola subsp. Acyrthosiphon pisum (strain 5A)</name>
    <dbReference type="NCBI Taxonomy" id="563178"/>
    <lineage>
        <taxon>Bacteria</taxon>
        <taxon>Pseudomonadati</taxon>
        <taxon>Pseudomonadota</taxon>
        <taxon>Gammaproteobacteria</taxon>
        <taxon>Enterobacterales</taxon>
        <taxon>Erwiniaceae</taxon>
        <taxon>Buchnera</taxon>
    </lineage>
</organism>
<dbReference type="EC" id="2.3.1.234" evidence="1"/>
<dbReference type="EMBL" id="CP001161">
    <property type="protein sequence ID" value="ACL30438.1"/>
    <property type="molecule type" value="Genomic_DNA"/>
</dbReference>
<dbReference type="RefSeq" id="WP_009874015.1">
    <property type="nucleotide sequence ID" value="NC_011833.1"/>
</dbReference>
<dbReference type="SMR" id="B8D8L6"/>
<dbReference type="KEGG" id="bap:BUAP5A_057"/>
<dbReference type="HOGENOM" id="CLU_023208_0_2_6"/>
<dbReference type="OrthoDB" id="9806197at2"/>
<dbReference type="Proteomes" id="UP000006904">
    <property type="component" value="Chromosome"/>
</dbReference>
<dbReference type="GO" id="GO:0005737">
    <property type="term" value="C:cytoplasm"/>
    <property type="evidence" value="ECO:0007669"/>
    <property type="project" value="UniProtKB-SubCell"/>
</dbReference>
<dbReference type="GO" id="GO:0005506">
    <property type="term" value="F:iron ion binding"/>
    <property type="evidence" value="ECO:0007669"/>
    <property type="project" value="UniProtKB-UniRule"/>
</dbReference>
<dbReference type="GO" id="GO:0061711">
    <property type="term" value="F:N(6)-L-threonylcarbamoyladenine synthase activity"/>
    <property type="evidence" value="ECO:0007669"/>
    <property type="project" value="UniProtKB-EC"/>
</dbReference>
<dbReference type="GO" id="GO:0002949">
    <property type="term" value="P:tRNA threonylcarbamoyladenosine modification"/>
    <property type="evidence" value="ECO:0007669"/>
    <property type="project" value="UniProtKB-UniRule"/>
</dbReference>
<dbReference type="FunFam" id="3.30.420.40:FF:000012">
    <property type="entry name" value="tRNA N6-adenosine threonylcarbamoyltransferase"/>
    <property type="match status" value="1"/>
</dbReference>
<dbReference type="Gene3D" id="3.30.420.40">
    <property type="match status" value="2"/>
</dbReference>
<dbReference type="HAMAP" id="MF_01445">
    <property type="entry name" value="TsaD"/>
    <property type="match status" value="1"/>
</dbReference>
<dbReference type="InterPro" id="IPR043129">
    <property type="entry name" value="ATPase_NBD"/>
</dbReference>
<dbReference type="InterPro" id="IPR000905">
    <property type="entry name" value="Gcp-like_dom"/>
</dbReference>
<dbReference type="InterPro" id="IPR017861">
    <property type="entry name" value="KAE1/TsaD"/>
</dbReference>
<dbReference type="InterPro" id="IPR017860">
    <property type="entry name" value="Peptidase_M22_CS"/>
</dbReference>
<dbReference type="InterPro" id="IPR022450">
    <property type="entry name" value="TsaD"/>
</dbReference>
<dbReference type="NCBIfam" id="TIGR00329">
    <property type="entry name" value="gcp_kae1"/>
    <property type="match status" value="1"/>
</dbReference>
<dbReference type="NCBIfam" id="TIGR03723">
    <property type="entry name" value="T6A_TsaD_YgjD"/>
    <property type="match status" value="1"/>
</dbReference>
<dbReference type="PANTHER" id="PTHR11735">
    <property type="entry name" value="TRNA N6-ADENOSINE THREONYLCARBAMOYLTRANSFERASE"/>
    <property type="match status" value="1"/>
</dbReference>
<dbReference type="PANTHER" id="PTHR11735:SF6">
    <property type="entry name" value="TRNA N6-ADENOSINE THREONYLCARBAMOYLTRANSFERASE, MITOCHONDRIAL"/>
    <property type="match status" value="1"/>
</dbReference>
<dbReference type="Pfam" id="PF00814">
    <property type="entry name" value="TsaD"/>
    <property type="match status" value="1"/>
</dbReference>
<dbReference type="PRINTS" id="PR00789">
    <property type="entry name" value="OSIALOPTASE"/>
</dbReference>
<dbReference type="SUPFAM" id="SSF53067">
    <property type="entry name" value="Actin-like ATPase domain"/>
    <property type="match status" value="2"/>
</dbReference>
<dbReference type="PROSITE" id="PS01016">
    <property type="entry name" value="GLYCOPROTEASE"/>
    <property type="match status" value="1"/>
</dbReference>
<accession>B8D8L6</accession>
<protein>
    <recommendedName>
        <fullName evidence="1">tRNA N6-adenosine threonylcarbamoyltransferase</fullName>
        <ecNumber evidence="1">2.3.1.234</ecNumber>
    </recommendedName>
    <alternativeName>
        <fullName evidence="1">N6-L-threonylcarbamoyladenine synthase</fullName>
        <shortName evidence="1">t(6)A synthase</shortName>
    </alternativeName>
    <alternativeName>
        <fullName evidence="1">t(6)A37 threonylcarbamoyladenosine biosynthesis protein TsaD</fullName>
    </alternativeName>
    <alternativeName>
        <fullName evidence="1">tRNA threonylcarbamoyladenosine biosynthesis protein TsaD</fullName>
    </alternativeName>
</protein>
<keyword id="KW-0012">Acyltransferase</keyword>
<keyword id="KW-0963">Cytoplasm</keyword>
<keyword id="KW-0408">Iron</keyword>
<keyword id="KW-0479">Metal-binding</keyword>
<keyword id="KW-0808">Transferase</keyword>
<keyword id="KW-0819">tRNA processing</keyword>